<gene>
    <name evidence="1" type="primary">pheS</name>
    <name type="ordered locus">Amet_1639</name>
</gene>
<name>SYFA_ALKMQ</name>
<organism>
    <name type="scientific">Alkaliphilus metalliredigens (strain QYMF)</name>
    <dbReference type="NCBI Taxonomy" id="293826"/>
    <lineage>
        <taxon>Bacteria</taxon>
        <taxon>Bacillati</taxon>
        <taxon>Bacillota</taxon>
        <taxon>Clostridia</taxon>
        <taxon>Peptostreptococcales</taxon>
        <taxon>Natronincolaceae</taxon>
        <taxon>Alkaliphilus</taxon>
    </lineage>
</organism>
<keyword id="KW-0030">Aminoacyl-tRNA synthetase</keyword>
<keyword id="KW-0067">ATP-binding</keyword>
<keyword id="KW-0963">Cytoplasm</keyword>
<keyword id="KW-0436">Ligase</keyword>
<keyword id="KW-0460">Magnesium</keyword>
<keyword id="KW-0479">Metal-binding</keyword>
<keyword id="KW-0547">Nucleotide-binding</keyword>
<keyword id="KW-0648">Protein biosynthesis</keyword>
<keyword id="KW-1185">Reference proteome</keyword>
<comment type="catalytic activity">
    <reaction evidence="1">
        <text>tRNA(Phe) + L-phenylalanine + ATP = L-phenylalanyl-tRNA(Phe) + AMP + diphosphate + H(+)</text>
        <dbReference type="Rhea" id="RHEA:19413"/>
        <dbReference type="Rhea" id="RHEA-COMP:9668"/>
        <dbReference type="Rhea" id="RHEA-COMP:9699"/>
        <dbReference type="ChEBI" id="CHEBI:15378"/>
        <dbReference type="ChEBI" id="CHEBI:30616"/>
        <dbReference type="ChEBI" id="CHEBI:33019"/>
        <dbReference type="ChEBI" id="CHEBI:58095"/>
        <dbReference type="ChEBI" id="CHEBI:78442"/>
        <dbReference type="ChEBI" id="CHEBI:78531"/>
        <dbReference type="ChEBI" id="CHEBI:456215"/>
        <dbReference type="EC" id="6.1.1.20"/>
    </reaction>
</comment>
<comment type="cofactor">
    <cofactor evidence="1">
        <name>Mg(2+)</name>
        <dbReference type="ChEBI" id="CHEBI:18420"/>
    </cofactor>
    <text evidence="1">Binds 2 magnesium ions per tetramer.</text>
</comment>
<comment type="subunit">
    <text evidence="1">Tetramer of two alpha and two beta subunits.</text>
</comment>
<comment type="subcellular location">
    <subcellularLocation>
        <location evidence="1">Cytoplasm</location>
    </subcellularLocation>
</comment>
<comment type="similarity">
    <text evidence="1">Belongs to the class-II aminoacyl-tRNA synthetase family. Phe-tRNA synthetase alpha subunit type 1 subfamily.</text>
</comment>
<sequence>MEAKLKQLEEKAKQDIQASTSTDSLEKVRVKYLGKKGELTEVLRGMGSLSKEERPLVGKIANLVREQIEEALELAKGAVKDKELESKLKMESLDVTMPGKTREIGKRHPLIQAMDELKSIFIGMGFKVAEGPEVETVHYNFDALNAAPNHPSRDMSDTFYINDHIILRTQTSPVQVRTMELQKPPIRIISPGRCFRNDTPDATHTPMFHQLEGLVVDKGITLGDLKGTLEVFIKQFFGNDTKVKFRPHHFPFTEPSAEVDVTCFKCAGHGCSMCKGEGWIELLGAGMVHPNVLRNCGIDPEIYSGFAFGMGIDRLTMAKYEIDDIRLLFENDMRFINQF</sequence>
<protein>
    <recommendedName>
        <fullName evidence="1">Phenylalanine--tRNA ligase alpha subunit</fullName>
        <ecNumber evidence="1">6.1.1.20</ecNumber>
    </recommendedName>
    <alternativeName>
        <fullName evidence="1">Phenylalanyl-tRNA synthetase alpha subunit</fullName>
        <shortName evidence="1">PheRS</shortName>
    </alternativeName>
</protein>
<feature type="chain" id="PRO_1000059233" description="Phenylalanine--tRNA ligase alpha subunit">
    <location>
        <begin position="1"/>
        <end position="339"/>
    </location>
</feature>
<feature type="region of interest" description="Disordered" evidence="2">
    <location>
        <begin position="1"/>
        <end position="20"/>
    </location>
</feature>
<feature type="compositionally biased region" description="Basic and acidic residues" evidence="2">
    <location>
        <begin position="1"/>
        <end position="14"/>
    </location>
</feature>
<feature type="binding site" evidence="1">
    <location>
        <position position="254"/>
    </location>
    <ligand>
        <name>Mg(2+)</name>
        <dbReference type="ChEBI" id="CHEBI:18420"/>
        <note>shared with beta subunit</note>
    </ligand>
</feature>
<evidence type="ECO:0000255" key="1">
    <source>
        <dbReference type="HAMAP-Rule" id="MF_00281"/>
    </source>
</evidence>
<evidence type="ECO:0000256" key="2">
    <source>
        <dbReference type="SAM" id="MobiDB-lite"/>
    </source>
</evidence>
<accession>A6TNP8</accession>
<dbReference type="EC" id="6.1.1.20" evidence="1"/>
<dbReference type="EMBL" id="CP000724">
    <property type="protein sequence ID" value="ABR47816.1"/>
    <property type="molecule type" value="Genomic_DNA"/>
</dbReference>
<dbReference type="RefSeq" id="WP_012062854.1">
    <property type="nucleotide sequence ID" value="NC_009633.1"/>
</dbReference>
<dbReference type="SMR" id="A6TNP8"/>
<dbReference type="STRING" id="293826.Amet_1639"/>
<dbReference type="KEGG" id="amt:Amet_1639"/>
<dbReference type="eggNOG" id="COG0016">
    <property type="taxonomic scope" value="Bacteria"/>
</dbReference>
<dbReference type="HOGENOM" id="CLU_025086_0_1_9"/>
<dbReference type="OrthoDB" id="9800719at2"/>
<dbReference type="Proteomes" id="UP000001572">
    <property type="component" value="Chromosome"/>
</dbReference>
<dbReference type="GO" id="GO:0005737">
    <property type="term" value="C:cytoplasm"/>
    <property type="evidence" value="ECO:0007669"/>
    <property type="project" value="UniProtKB-SubCell"/>
</dbReference>
<dbReference type="GO" id="GO:0005524">
    <property type="term" value="F:ATP binding"/>
    <property type="evidence" value="ECO:0007669"/>
    <property type="project" value="UniProtKB-UniRule"/>
</dbReference>
<dbReference type="GO" id="GO:0140096">
    <property type="term" value="F:catalytic activity, acting on a protein"/>
    <property type="evidence" value="ECO:0007669"/>
    <property type="project" value="UniProtKB-ARBA"/>
</dbReference>
<dbReference type="GO" id="GO:0000287">
    <property type="term" value="F:magnesium ion binding"/>
    <property type="evidence" value="ECO:0007669"/>
    <property type="project" value="UniProtKB-UniRule"/>
</dbReference>
<dbReference type="GO" id="GO:0004826">
    <property type="term" value="F:phenylalanine-tRNA ligase activity"/>
    <property type="evidence" value="ECO:0007669"/>
    <property type="project" value="UniProtKB-UniRule"/>
</dbReference>
<dbReference type="GO" id="GO:0016740">
    <property type="term" value="F:transferase activity"/>
    <property type="evidence" value="ECO:0007669"/>
    <property type="project" value="UniProtKB-ARBA"/>
</dbReference>
<dbReference type="GO" id="GO:0000049">
    <property type="term" value="F:tRNA binding"/>
    <property type="evidence" value="ECO:0007669"/>
    <property type="project" value="InterPro"/>
</dbReference>
<dbReference type="GO" id="GO:0006432">
    <property type="term" value="P:phenylalanyl-tRNA aminoacylation"/>
    <property type="evidence" value="ECO:0007669"/>
    <property type="project" value="UniProtKB-UniRule"/>
</dbReference>
<dbReference type="CDD" id="cd00496">
    <property type="entry name" value="PheRS_alpha_core"/>
    <property type="match status" value="1"/>
</dbReference>
<dbReference type="FunFam" id="3.30.930.10:FF:000003">
    <property type="entry name" value="Phenylalanine--tRNA ligase alpha subunit"/>
    <property type="match status" value="1"/>
</dbReference>
<dbReference type="Gene3D" id="3.30.930.10">
    <property type="entry name" value="Bira Bifunctional Protein, Domain 2"/>
    <property type="match status" value="1"/>
</dbReference>
<dbReference type="HAMAP" id="MF_00281">
    <property type="entry name" value="Phe_tRNA_synth_alpha1"/>
    <property type="match status" value="1"/>
</dbReference>
<dbReference type="InterPro" id="IPR006195">
    <property type="entry name" value="aa-tRNA-synth_II"/>
</dbReference>
<dbReference type="InterPro" id="IPR045864">
    <property type="entry name" value="aa-tRNA-synth_II/BPL/LPL"/>
</dbReference>
<dbReference type="InterPro" id="IPR004529">
    <property type="entry name" value="Phe-tRNA-synth_IIc_asu"/>
</dbReference>
<dbReference type="InterPro" id="IPR004188">
    <property type="entry name" value="Phe-tRNA_ligase_II_N"/>
</dbReference>
<dbReference type="InterPro" id="IPR022911">
    <property type="entry name" value="Phe_tRNA_ligase_alpha1_bac"/>
</dbReference>
<dbReference type="InterPro" id="IPR002319">
    <property type="entry name" value="Phenylalanyl-tRNA_Synthase"/>
</dbReference>
<dbReference type="InterPro" id="IPR010978">
    <property type="entry name" value="tRNA-bd_arm"/>
</dbReference>
<dbReference type="NCBIfam" id="TIGR00468">
    <property type="entry name" value="pheS"/>
    <property type="match status" value="1"/>
</dbReference>
<dbReference type="PANTHER" id="PTHR11538:SF41">
    <property type="entry name" value="PHENYLALANINE--TRNA LIGASE, MITOCHONDRIAL"/>
    <property type="match status" value="1"/>
</dbReference>
<dbReference type="PANTHER" id="PTHR11538">
    <property type="entry name" value="PHENYLALANYL-TRNA SYNTHETASE"/>
    <property type="match status" value="1"/>
</dbReference>
<dbReference type="Pfam" id="PF02912">
    <property type="entry name" value="Phe_tRNA-synt_N"/>
    <property type="match status" value="1"/>
</dbReference>
<dbReference type="Pfam" id="PF01409">
    <property type="entry name" value="tRNA-synt_2d"/>
    <property type="match status" value="1"/>
</dbReference>
<dbReference type="SUPFAM" id="SSF55681">
    <property type="entry name" value="Class II aaRS and biotin synthetases"/>
    <property type="match status" value="1"/>
</dbReference>
<dbReference type="SUPFAM" id="SSF46589">
    <property type="entry name" value="tRNA-binding arm"/>
    <property type="match status" value="1"/>
</dbReference>
<dbReference type="PROSITE" id="PS50862">
    <property type="entry name" value="AA_TRNA_LIGASE_II"/>
    <property type="match status" value="1"/>
</dbReference>
<reference key="1">
    <citation type="journal article" date="2016" name="Genome Announc.">
        <title>Complete genome sequence of Alkaliphilus metalliredigens strain QYMF, an alkaliphilic and metal-reducing bacterium isolated from borax-contaminated leachate ponds.</title>
        <authorList>
            <person name="Hwang C."/>
            <person name="Copeland A."/>
            <person name="Lucas S."/>
            <person name="Lapidus A."/>
            <person name="Barry K."/>
            <person name="Detter J.C."/>
            <person name="Glavina Del Rio T."/>
            <person name="Hammon N."/>
            <person name="Israni S."/>
            <person name="Dalin E."/>
            <person name="Tice H."/>
            <person name="Pitluck S."/>
            <person name="Chertkov O."/>
            <person name="Brettin T."/>
            <person name="Bruce D."/>
            <person name="Han C."/>
            <person name="Schmutz J."/>
            <person name="Larimer F."/>
            <person name="Land M.L."/>
            <person name="Hauser L."/>
            <person name="Kyrpides N."/>
            <person name="Mikhailova N."/>
            <person name="Ye Q."/>
            <person name="Zhou J."/>
            <person name="Richardson P."/>
            <person name="Fields M.W."/>
        </authorList>
    </citation>
    <scope>NUCLEOTIDE SEQUENCE [LARGE SCALE GENOMIC DNA]</scope>
    <source>
        <strain>QYMF</strain>
    </source>
</reference>
<proteinExistence type="inferred from homology"/>